<gene>
    <name evidence="1" type="primary">dnaJ</name>
    <name type="ordered locus">EAT1b_0615</name>
</gene>
<organism>
    <name type="scientific">Exiguobacterium sp. (strain ATCC BAA-1283 / AT1b)</name>
    <dbReference type="NCBI Taxonomy" id="360911"/>
    <lineage>
        <taxon>Bacteria</taxon>
        <taxon>Bacillati</taxon>
        <taxon>Bacillota</taxon>
        <taxon>Bacilli</taxon>
        <taxon>Bacillales</taxon>
        <taxon>Bacillales Family XII. Incertae Sedis</taxon>
        <taxon>Exiguobacterium</taxon>
    </lineage>
</organism>
<dbReference type="EMBL" id="CP001615">
    <property type="protein sequence ID" value="ACQ69546.1"/>
    <property type="molecule type" value="Genomic_DNA"/>
</dbReference>
<dbReference type="RefSeq" id="WP_012726665.1">
    <property type="nucleotide sequence ID" value="NC_012673.1"/>
</dbReference>
<dbReference type="SMR" id="C4L424"/>
<dbReference type="STRING" id="360911.EAT1b_0615"/>
<dbReference type="KEGG" id="eat:EAT1b_0615"/>
<dbReference type="eggNOG" id="COG0484">
    <property type="taxonomic scope" value="Bacteria"/>
</dbReference>
<dbReference type="HOGENOM" id="CLU_017633_0_7_9"/>
<dbReference type="OrthoDB" id="9779889at2"/>
<dbReference type="Proteomes" id="UP000000716">
    <property type="component" value="Chromosome"/>
</dbReference>
<dbReference type="GO" id="GO:0005737">
    <property type="term" value="C:cytoplasm"/>
    <property type="evidence" value="ECO:0007669"/>
    <property type="project" value="UniProtKB-SubCell"/>
</dbReference>
<dbReference type="GO" id="GO:0005524">
    <property type="term" value="F:ATP binding"/>
    <property type="evidence" value="ECO:0007669"/>
    <property type="project" value="InterPro"/>
</dbReference>
<dbReference type="GO" id="GO:0031072">
    <property type="term" value="F:heat shock protein binding"/>
    <property type="evidence" value="ECO:0007669"/>
    <property type="project" value="InterPro"/>
</dbReference>
<dbReference type="GO" id="GO:0051082">
    <property type="term" value="F:unfolded protein binding"/>
    <property type="evidence" value="ECO:0007669"/>
    <property type="project" value="UniProtKB-UniRule"/>
</dbReference>
<dbReference type="GO" id="GO:0008270">
    <property type="term" value="F:zinc ion binding"/>
    <property type="evidence" value="ECO:0007669"/>
    <property type="project" value="UniProtKB-UniRule"/>
</dbReference>
<dbReference type="GO" id="GO:0051085">
    <property type="term" value="P:chaperone cofactor-dependent protein refolding"/>
    <property type="evidence" value="ECO:0007669"/>
    <property type="project" value="TreeGrafter"/>
</dbReference>
<dbReference type="GO" id="GO:0006260">
    <property type="term" value="P:DNA replication"/>
    <property type="evidence" value="ECO:0007669"/>
    <property type="project" value="UniProtKB-KW"/>
</dbReference>
<dbReference type="GO" id="GO:0042026">
    <property type="term" value="P:protein refolding"/>
    <property type="evidence" value="ECO:0007669"/>
    <property type="project" value="TreeGrafter"/>
</dbReference>
<dbReference type="GO" id="GO:0009408">
    <property type="term" value="P:response to heat"/>
    <property type="evidence" value="ECO:0007669"/>
    <property type="project" value="InterPro"/>
</dbReference>
<dbReference type="CDD" id="cd06257">
    <property type="entry name" value="DnaJ"/>
    <property type="match status" value="1"/>
</dbReference>
<dbReference type="CDD" id="cd10747">
    <property type="entry name" value="DnaJ_C"/>
    <property type="match status" value="1"/>
</dbReference>
<dbReference type="CDD" id="cd10719">
    <property type="entry name" value="DnaJ_zf"/>
    <property type="match status" value="1"/>
</dbReference>
<dbReference type="FunFam" id="1.10.287.110:FF:000031">
    <property type="entry name" value="Molecular chaperone DnaJ"/>
    <property type="match status" value="1"/>
</dbReference>
<dbReference type="FunFam" id="2.10.230.10:FF:000002">
    <property type="entry name" value="Molecular chaperone DnaJ"/>
    <property type="match status" value="1"/>
</dbReference>
<dbReference type="FunFam" id="2.60.260.20:FF:000004">
    <property type="entry name" value="Molecular chaperone DnaJ"/>
    <property type="match status" value="1"/>
</dbReference>
<dbReference type="Gene3D" id="6.20.20.10">
    <property type="match status" value="2"/>
</dbReference>
<dbReference type="Gene3D" id="1.10.287.110">
    <property type="entry name" value="DnaJ domain"/>
    <property type="match status" value="1"/>
</dbReference>
<dbReference type="Gene3D" id="2.60.260.20">
    <property type="entry name" value="Urease metallochaperone UreE, N-terminal domain"/>
    <property type="match status" value="2"/>
</dbReference>
<dbReference type="HAMAP" id="MF_01152">
    <property type="entry name" value="DnaJ"/>
    <property type="match status" value="1"/>
</dbReference>
<dbReference type="InterPro" id="IPR012724">
    <property type="entry name" value="DnaJ"/>
</dbReference>
<dbReference type="InterPro" id="IPR002939">
    <property type="entry name" value="DnaJ_C"/>
</dbReference>
<dbReference type="InterPro" id="IPR001623">
    <property type="entry name" value="DnaJ_domain"/>
</dbReference>
<dbReference type="InterPro" id="IPR018253">
    <property type="entry name" value="DnaJ_domain_CS"/>
</dbReference>
<dbReference type="InterPro" id="IPR008971">
    <property type="entry name" value="HSP40/DnaJ_pept-bd"/>
</dbReference>
<dbReference type="InterPro" id="IPR001305">
    <property type="entry name" value="HSP_DnaJ_Cys-rich_dom"/>
</dbReference>
<dbReference type="InterPro" id="IPR036410">
    <property type="entry name" value="HSP_DnaJ_Cys-rich_dom_sf"/>
</dbReference>
<dbReference type="InterPro" id="IPR036869">
    <property type="entry name" value="J_dom_sf"/>
</dbReference>
<dbReference type="NCBIfam" id="TIGR02349">
    <property type="entry name" value="DnaJ_bact"/>
    <property type="match status" value="1"/>
</dbReference>
<dbReference type="NCBIfam" id="NF008035">
    <property type="entry name" value="PRK10767.1"/>
    <property type="match status" value="1"/>
</dbReference>
<dbReference type="NCBIfam" id="NF010873">
    <property type="entry name" value="PRK14280.1"/>
    <property type="match status" value="1"/>
</dbReference>
<dbReference type="PANTHER" id="PTHR43096:SF48">
    <property type="entry name" value="CHAPERONE PROTEIN DNAJ"/>
    <property type="match status" value="1"/>
</dbReference>
<dbReference type="PANTHER" id="PTHR43096">
    <property type="entry name" value="DNAJ HOMOLOG 1, MITOCHONDRIAL-RELATED"/>
    <property type="match status" value="1"/>
</dbReference>
<dbReference type="Pfam" id="PF00226">
    <property type="entry name" value="DnaJ"/>
    <property type="match status" value="1"/>
</dbReference>
<dbReference type="Pfam" id="PF01556">
    <property type="entry name" value="DnaJ_C"/>
    <property type="match status" value="1"/>
</dbReference>
<dbReference type="Pfam" id="PF00684">
    <property type="entry name" value="DnaJ_CXXCXGXG"/>
    <property type="match status" value="1"/>
</dbReference>
<dbReference type="PRINTS" id="PR00625">
    <property type="entry name" value="JDOMAIN"/>
</dbReference>
<dbReference type="SMART" id="SM00271">
    <property type="entry name" value="DnaJ"/>
    <property type="match status" value="1"/>
</dbReference>
<dbReference type="SUPFAM" id="SSF46565">
    <property type="entry name" value="Chaperone J-domain"/>
    <property type="match status" value="1"/>
</dbReference>
<dbReference type="SUPFAM" id="SSF57938">
    <property type="entry name" value="DnaJ/Hsp40 cysteine-rich domain"/>
    <property type="match status" value="1"/>
</dbReference>
<dbReference type="SUPFAM" id="SSF49493">
    <property type="entry name" value="HSP40/DnaJ peptide-binding domain"/>
    <property type="match status" value="2"/>
</dbReference>
<dbReference type="PROSITE" id="PS00636">
    <property type="entry name" value="DNAJ_1"/>
    <property type="match status" value="1"/>
</dbReference>
<dbReference type="PROSITE" id="PS50076">
    <property type="entry name" value="DNAJ_2"/>
    <property type="match status" value="1"/>
</dbReference>
<dbReference type="PROSITE" id="PS51188">
    <property type="entry name" value="ZF_CR"/>
    <property type="match status" value="1"/>
</dbReference>
<reference key="1">
    <citation type="journal article" date="2011" name="J. Bacteriol.">
        <title>Complete genome sequence of the Thermophilic Bacterium Exiguobacterium sp. AT1b.</title>
        <authorList>
            <person name="Vishnivetskaya T.A."/>
            <person name="Lucas S."/>
            <person name="Copeland A."/>
            <person name="Lapidus A."/>
            <person name="Glavina del Rio T."/>
            <person name="Dalin E."/>
            <person name="Tice H."/>
            <person name="Bruce D.C."/>
            <person name="Goodwin L.A."/>
            <person name="Pitluck S."/>
            <person name="Saunders E."/>
            <person name="Brettin T."/>
            <person name="Detter C."/>
            <person name="Han C."/>
            <person name="Larimer F."/>
            <person name="Land M.L."/>
            <person name="Hauser L.J."/>
            <person name="Kyrpides N.C."/>
            <person name="Ovchinnikova G."/>
            <person name="Kathariou S."/>
            <person name="Ramaley R.F."/>
            <person name="Rodrigues D.F."/>
            <person name="Hendrix C."/>
            <person name="Richardson P."/>
            <person name="Tiedje J.M."/>
        </authorList>
    </citation>
    <scope>NUCLEOTIDE SEQUENCE [LARGE SCALE GENOMIC DNA]</scope>
    <source>
        <strain>ATCC BAA-1283 / AT1b</strain>
    </source>
</reference>
<name>DNAJ_EXISA</name>
<feature type="chain" id="PRO_1000213683" description="Chaperone protein DnaJ">
    <location>
        <begin position="1"/>
        <end position="368"/>
    </location>
</feature>
<feature type="domain" description="J" evidence="1">
    <location>
        <begin position="5"/>
        <end position="69"/>
    </location>
</feature>
<feature type="repeat" description="CXXCXGXG motif">
    <location>
        <begin position="139"/>
        <end position="146"/>
    </location>
</feature>
<feature type="repeat" description="CXXCXGXG motif">
    <location>
        <begin position="156"/>
        <end position="163"/>
    </location>
</feature>
<feature type="repeat" description="CXXCXGXG motif">
    <location>
        <begin position="182"/>
        <end position="189"/>
    </location>
</feature>
<feature type="repeat" description="CXXCXGXG motif">
    <location>
        <begin position="196"/>
        <end position="203"/>
    </location>
</feature>
<feature type="zinc finger region" description="CR-type" evidence="1">
    <location>
        <begin position="126"/>
        <end position="208"/>
    </location>
</feature>
<feature type="binding site" evidence="1">
    <location>
        <position position="139"/>
    </location>
    <ligand>
        <name>Zn(2+)</name>
        <dbReference type="ChEBI" id="CHEBI:29105"/>
        <label>1</label>
    </ligand>
</feature>
<feature type="binding site" evidence="1">
    <location>
        <position position="142"/>
    </location>
    <ligand>
        <name>Zn(2+)</name>
        <dbReference type="ChEBI" id="CHEBI:29105"/>
        <label>1</label>
    </ligand>
</feature>
<feature type="binding site" evidence="1">
    <location>
        <position position="156"/>
    </location>
    <ligand>
        <name>Zn(2+)</name>
        <dbReference type="ChEBI" id="CHEBI:29105"/>
        <label>2</label>
    </ligand>
</feature>
<feature type="binding site" evidence="1">
    <location>
        <position position="159"/>
    </location>
    <ligand>
        <name>Zn(2+)</name>
        <dbReference type="ChEBI" id="CHEBI:29105"/>
        <label>2</label>
    </ligand>
</feature>
<feature type="binding site" evidence="1">
    <location>
        <position position="182"/>
    </location>
    <ligand>
        <name>Zn(2+)</name>
        <dbReference type="ChEBI" id="CHEBI:29105"/>
        <label>2</label>
    </ligand>
</feature>
<feature type="binding site" evidence="1">
    <location>
        <position position="185"/>
    </location>
    <ligand>
        <name>Zn(2+)</name>
        <dbReference type="ChEBI" id="CHEBI:29105"/>
        <label>2</label>
    </ligand>
</feature>
<feature type="binding site" evidence="1">
    <location>
        <position position="196"/>
    </location>
    <ligand>
        <name>Zn(2+)</name>
        <dbReference type="ChEBI" id="CHEBI:29105"/>
        <label>1</label>
    </ligand>
</feature>
<feature type="binding site" evidence="1">
    <location>
        <position position="199"/>
    </location>
    <ligand>
        <name>Zn(2+)</name>
        <dbReference type="ChEBI" id="CHEBI:29105"/>
        <label>1</label>
    </ligand>
</feature>
<protein>
    <recommendedName>
        <fullName evidence="1">Chaperone protein DnaJ</fullName>
    </recommendedName>
</protein>
<accession>C4L424</accession>
<evidence type="ECO:0000255" key="1">
    <source>
        <dbReference type="HAMAP-Rule" id="MF_01152"/>
    </source>
</evidence>
<sequence length="368" mass="40305">MAKRDYYEVLGLDKSASAQDIKRAYRKLARQYHPDINQEADAADKFKEIGEAYEVLSDEQKRAQYDRFGFEGANQFGGGGDFQGGFGDIFDMFFGGGGRRQDPNAPRRGEDYQYVVDLDFMESVTGKTETIELEIEVECDTCMGSGAKPGTKPETCNRCGGSGVETVEQNTILGRMVNQRPCSQCHGSGKTIKEKCPTCHGSGHVKKKQTVEVKIPAGIDNGQQIRLSGKGGPGVNGGPAGDLYVVVRVRAHEIFERVDQHIAMDMPITFAQAALGAEIEVPTVHGNVSLKVPAGTQTGSKFRLRGKGMPSVRGGANGDQYVSVIVMTPKNMTDRQKELLREFEEISGESGVEEEHGMFQKMKKFFSH</sequence>
<keyword id="KW-0143">Chaperone</keyword>
<keyword id="KW-0963">Cytoplasm</keyword>
<keyword id="KW-0235">DNA replication</keyword>
<keyword id="KW-0479">Metal-binding</keyword>
<keyword id="KW-0677">Repeat</keyword>
<keyword id="KW-0346">Stress response</keyword>
<keyword id="KW-0862">Zinc</keyword>
<keyword id="KW-0863">Zinc-finger</keyword>
<proteinExistence type="inferred from homology"/>
<comment type="function">
    <text evidence="1">Participates actively in the response to hyperosmotic and heat shock by preventing the aggregation of stress-denatured proteins and by disaggregating proteins, also in an autonomous, DnaK-independent fashion. Unfolded proteins bind initially to DnaJ; upon interaction with the DnaJ-bound protein, DnaK hydrolyzes its bound ATP, resulting in the formation of a stable complex. GrpE releases ADP from DnaK; ATP binding to DnaK triggers the release of the substrate protein, thus completing the reaction cycle. Several rounds of ATP-dependent interactions between DnaJ, DnaK and GrpE are required for fully efficient folding. Also involved, together with DnaK and GrpE, in the DNA replication of plasmids through activation of initiation proteins.</text>
</comment>
<comment type="cofactor">
    <cofactor evidence="1">
        <name>Zn(2+)</name>
        <dbReference type="ChEBI" id="CHEBI:29105"/>
    </cofactor>
    <text evidence="1">Binds 2 Zn(2+) ions per monomer.</text>
</comment>
<comment type="subunit">
    <text evidence="1">Homodimer.</text>
</comment>
<comment type="subcellular location">
    <subcellularLocation>
        <location evidence="1">Cytoplasm</location>
    </subcellularLocation>
</comment>
<comment type="domain">
    <text evidence="1">The J domain is necessary and sufficient to stimulate DnaK ATPase activity. Zinc center 1 plays an important role in the autonomous, DnaK-independent chaperone activity of DnaJ. Zinc center 2 is essential for interaction with DnaK and for DnaJ activity.</text>
</comment>
<comment type="similarity">
    <text evidence="1">Belongs to the DnaJ family.</text>
</comment>